<name>PLSY_BRASO</name>
<sequence length="198" mass="20671">MGSEAMLPVALLIGYLLGSIPFGLILTKLAGTQDLRSIGSGNIGATNVLRTGRKGLAAATLLGDALKGTAAVIIAGYLGGSNAAMLAGLGAFLGHLFPVWLKFRGGKGVAVYIGILIGLLWPYAIFFCLVWLATAFASRYSSLAALVASVLTPIVLWAFGHTALAALFALLTLLLIYMHRENIKRLRAGTESKIGAKK</sequence>
<accession>A4YWG6</accession>
<dbReference type="EC" id="2.3.1.275" evidence="1"/>
<dbReference type="EMBL" id="CU234118">
    <property type="protein sequence ID" value="CAL78242.1"/>
    <property type="molecule type" value="Genomic_DNA"/>
</dbReference>
<dbReference type="RefSeq" id="WP_011927352.1">
    <property type="nucleotide sequence ID" value="NC_009445.1"/>
</dbReference>
<dbReference type="SMR" id="A4YWG6"/>
<dbReference type="STRING" id="114615.BRADO4504"/>
<dbReference type="KEGG" id="bra:BRADO4504"/>
<dbReference type="eggNOG" id="COG0344">
    <property type="taxonomic scope" value="Bacteria"/>
</dbReference>
<dbReference type="HOGENOM" id="CLU_081254_1_0_5"/>
<dbReference type="OrthoDB" id="9777124at2"/>
<dbReference type="UniPathway" id="UPA00085"/>
<dbReference type="Proteomes" id="UP000001994">
    <property type="component" value="Chromosome"/>
</dbReference>
<dbReference type="GO" id="GO:0005886">
    <property type="term" value="C:plasma membrane"/>
    <property type="evidence" value="ECO:0007669"/>
    <property type="project" value="UniProtKB-SubCell"/>
</dbReference>
<dbReference type="GO" id="GO:0043772">
    <property type="term" value="F:acyl-phosphate glycerol-3-phosphate acyltransferase activity"/>
    <property type="evidence" value="ECO:0007669"/>
    <property type="project" value="UniProtKB-UniRule"/>
</dbReference>
<dbReference type="GO" id="GO:0008654">
    <property type="term" value="P:phospholipid biosynthetic process"/>
    <property type="evidence" value="ECO:0007669"/>
    <property type="project" value="UniProtKB-UniRule"/>
</dbReference>
<dbReference type="HAMAP" id="MF_01043">
    <property type="entry name" value="PlsY"/>
    <property type="match status" value="1"/>
</dbReference>
<dbReference type="InterPro" id="IPR003811">
    <property type="entry name" value="G3P_acylTferase_PlsY"/>
</dbReference>
<dbReference type="NCBIfam" id="TIGR00023">
    <property type="entry name" value="glycerol-3-phosphate 1-O-acyltransferase PlsY"/>
    <property type="match status" value="1"/>
</dbReference>
<dbReference type="PANTHER" id="PTHR30309:SF0">
    <property type="entry name" value="GLYCEROL-3-PHOSPHATE ACYLTRANSFERASE-RELATED"/>
    <property type="match status" value="1"/>
</dbReference>
<dbReference type="PANTHER" id="PTHR30309">
    <property type="entry name" value="INNER MEMBRANE PROTEIN YGIH"/>
    <property type="match status" value="1"/>
</dbReference>
<dbReference type="Pfam" id="PF02660">
    <property type="entry name" value="G3P_acyltransf"/>
    <property type="match status" value="1"/>
</dbReference>
<dbReference type="SMART" id="SM01207">
    <property type="entry name" value="G3P_acyltransf"/>
    <property type="match status" value="1"/>
</dbReference>
<evidence type="ECO:0000255" key="1">
    <source>
        <dbReference type="HAMAP-Rule" id="MF_01043"/>
    </source>
</evidence>
<proteinExistence type="inferred from homology"/>
<gene>
    <name evidence="1" type="primary">plsY</name>
    <name type="ordered locus">BRADO4504</name>
</gene>
<feature type="chain" id="PRO_1000064160" description="Glycerol-3-phosphate acyltransferase">
    <location>
        <begin position="1"/>
        <end position="198"/>
    </location>
</feature>
<feature type="transmembrane region" description="Helical" evidence="1">
    <location>
        <begin position="6"/>
        <end position="26"/>
    </location>
</feature>
<feature type="transmembrane region" description="Helical" evidence="1">
    <location>
        <begin position="56"/>
        <end position="78"/>
    </location>
</feature>
<feature type="transmembrane region" description="Helical" evidence="1">
    <location>
        <begin position="83"/>
        <end position="101"/>
    </location>
</feature>
<feature type="transmembrane region" description="Helical" evidence="1">
    <location>
        <begin position="113"/>
        <end position="133"/>
    </location>
</feature>
<feature type="transmembrane region" description="Helical" evidence="1">
    <location>
        <begin position="154"/>
        <end position="174"/>
    </location>
</feature>
<protein>
    <recommendedName>
        <fullName evidence="1">Glycerol-3-phosphate acyltransferase</fullName>
    </recommendedName>
    <alternativeName>
        <fullName evidence="1">Acyl-PO4 G3P acyltransferase</fullName>
    </alternativeName>
    <alternativeName>
        <fullName evidence="1">Acyl-phosphate--glycerol-3-phosphate acyltransferase</fullName>
    </alternativeName>
    <alternativeName>
        <fullName evidence="1">G3P acyltransferase</fullName>
        <shortName evidence="1">GPAT</shortName>
        <ecNumber evidence="1">2.3.1.275</ecNumber>
    </alternativeName>
    <alternativeName>
        <fullName evidence="1">Lysophosphatidic acid synthase</fullName>
        <shortName evidence="1">LPA synthase</shortName>
    </alternativeName>
</protein>
<reference key="1">
    <citation type="journal article" date="2007" name="Science">
        <title>Legumes symbioses: absence of nod genes in photosynthetic bradyrhizobia.</title>
        <authorList>
            <person name="Giraud E."/>
            <person name="Moulin L."/>
            <person name="Vallenet D."/>
            <person name="Barbe V."/>
            <person name="Cytryn E."/>
            <person name="Avarre J.-C."/>
            <person name="Jaubert M."/>
            <person name="Simon D."/>
            <person name="Cartieaux F."/>
            <person name="Prin Y."/>
            <person name="Bena G."/>
            <person name="Hannibal L."/>
            <person name="Fardoux J."/>
            <person name="Kojadinovic M."/>
            <person name="Vuillet L."/>
            <person name="Lajus A."/>
            <person name="Cruveiller S."/>
            <person name="Rouy Z."/>
            <person name="Mangenot S."/>
            <person name="Segurens B."/>
            <person name="Dossat C."/>
            <person name="Franck W.L."/>
            <person name="Chang W.-S."/>
            <person name="Saunders E."/>
            <person name="Bruce D."/>
            <person name="Richardson P."/>
            <person name="Normand P."/>
            <person name="Dreyfus B."/>
            <person name="Pignol D."/>
            <person name="Stacey G."/>
            <person name="Emerich D."/>
            <person name="Vermeglio A."/>
            <person name="Medigue C."/>
            <person name="Sadowsky M."/>
        </authorList>
    </citation>
    <scope>NUCLEOTIDE SEQUENCE [LARGE SCALE GENOMIC DNA]</scope>
    <source>
        <strain>ORS 278</strain>
    </source>
</reference>
<keyword id="KW-0997">Cell inner membrane</keyword>
<keyword id="KW-1003">Cell membrane</keyword>
<keyword id="KW-0444">Lipid biosynthesis</keyword>
<keyword id="KW-0443">Lipid metabolism</keyword>
<keyword id="KW-0472">Membrane</keyword>
<keyword id="KW-0594">Phospholipid biosynthesis</keyword>
<keyword id="KW-1208">Phospholipid metabolism</keyword>
<keyword id="KW-1185">Reference proteome</keyword>
<keyword id="KW-0808">Transferase</keyword>
<keyword id="KW-0812">Transmembrane</keyword>
<keyword id="KW-1133">Transmembrane helix</keyword>
<comment type="function">
    <text evidence="1">Catalyzes the transfer of an acyl group from acyl-phosphate (acyl-PO(4)) to glycerol-3-phosphate (G3P) to form lysophosphatidic acid (LPA). This enzyme utilizes acyl-phosphate as fatty acyl donor, but not acyl-CoA or acyl-ACP.</text>
</comment>
<comment type="catalytic activity">
    <reaction evidence="1">
        <text>an acyl phosphate + sn-glycerol 3-phosphate = a 1-acyl-sn-glycero-3-phosphate + phosphate</text>
        <dbReference type="Rhea" id="RHEA:34075"/>
        <dbReference type="ChEBI" id="CHEBI:43474"/>
        <dbReference type="ChEBI" id="CHEBI:57597"/>
        <dbReference type="ChEBI" id="CHEBI:57970"/>
        <dbReference type="ChEBI" id="CHEBI:59918"/>
        <dbReference type="EC" id="2.3.1.275"/>
    </reaction>
</comment>
<comment type="pathway">
    <text evidence="1">Lipid metabolism; phospholipid metabolism.</text>
</comment>
<comment type="subunit">
    <text evidence="1">Probably interacts with PlsX.</text>
</comment>
<comment type="subcellular location">
    <subcellularLocation>
        <location evidence="1">Cell inner membrane</location>
        <topology evidence="1">Multi-pass membrane protein</topology>
    </subcellularLocation>
</comment>
<comment type="similarity">
    <text evidence="1">Belongs to the PlsY family.</text>
</comment>
<organism>
    <name type="scientific">Bradyrhizobium sp. (strain ORS 278)</name>
    <dbReference type="NCBI Taxonomy" id="114615"/>
    <lineage>
        <taxon>Bacteria</taxon>
        <taxon>Pseudomonadati</taxon>
        <taxon>Pseudomonadota</taxon>
        <taxon>Alphaproteobacteria</taxon>
        <taxon>Hyphomicrobiales</taxon>
        <taxon>Nitrobacteraceae</taxon>
        <taxon>Bradyrhizobium</taxon>
    </lineage>
</organism>